<sequence length="282" mass="31941">MTKLHKYLPQRTLSKIVGWLATREWGLLTQWAIRLFIRHYGINMQEAQYPDIGHYPSFNAFFTRYLKRELRPVVEEPRAIASPVDGIISEMGQIKGENLIQAKNHHYTITALLGEDPSRASQFLDGDFFTAYLAPKNYHRIHMPLDGRLIEMIHIPGKLFSVNPASVQTVPRLFARNERAVCLFETENGLMAVILVGAMLVGSINTVWHGTVVPTAEGIAVHNYREKNIKFKRGEEIGHFKMGSTVILLFPKNTIQWNPNCQPKGTICYGENIGTVSLIEVA</sequence>
<gene>
    <name evidence="1" type="primary">psd</name>
    <name type="ordered locus">CBU_1826</name>
</gene>
<feature type="chain" id="PRO_0000029645" description="Phosphatidylserine decarboxylase beta chain" evidence="1">
    <location>
        <begin position="1"/>
        <end position="243"/>
    </location>
</feature>
<feature type="chain" id="PRO_0000029646" description="Phosphatidylserine decarboxylase alpha chain" evidence="1">
    <location>
        <begin position="244"/>
        <end position="282"/>
    </location>
</feature>
<feature type="active site" description="Charge relay system; for autoendoproteolytic cleavage activity" evidence="1">
    <location>
        <position position="85"/>
    </location>
</feature>
<feature type="active site" description="Charge relay system; for autoendoproteolytic cleavage activity" evidence="1">
    <location>
        <position position="142"/>
    </location>
</feature>
<feature type="active site" description="Charge relay system; for autoendoproteolytic cleavage activity" evidence="1">
    <location>
        <position position="244"/>
    </location>
</feature>
<feature type="active site" description="Schiff-base intermediate with substrate; via pyruvic acid; for decarboxylase activity" evidence="1">
    <location>
        <position position="244"/>
    </location>
</feature>
<feature type="site" description="Cleavage (non-hydrolytic); by autocatalysis" evidence="1">
    <location>
        <begin position="243"/>
        <end position="244"/>
    </location>
</feature>
<feature type="modified residue" description="Pyruvic acid (Ser); by autocatalysis" evidence="1">
    <location>
        <position position="244"/>
    </location>
</feature>
<accession>Q83AQ4</accession>
<proteinExistence type="inferred from homology"/>
<name>PSD_COXBU</name>
<reference key="1">
    <citation type="journal article" date="2003" name="Proc. Natl. Acad. Sci. U.S.A.">
        <title>Complete genome sequence of the Q-fever pathogen, Coxiella burnetii.</title>
        <authorList>
            <person name="Seshadri R."/>
            <person name="Paulsen I.T."/>
            <person name="Eisen J.A."/>
            <person name="Read T.D."/>
            <person name="Nelson K.E."/>
            <person name="Nelson W.C."/>
            <person name="Ward N.L."/>
            <person name="Tettelin H."/>
            <person name="Davidsen T.M."/>
            <person name="Beanan M.J."/>
            <person name="DeBoy R.T."/>
            <person name="Daugherty S.C."/>
            <person name="Brinkac L.M."/>
            <person name="Madupu R."/>
            <person name="Dodson R.J."/>
            <person name="Khouri H.M."/>
            <person name="Lee K.H."/>
            <person name="Carty H.A."/>
            <person name="Scanlan D."/>
            <person name="Heinzen R.A."/>
            <person name="Thompson H.A."/>
            <person name="Samuel J.E."/>
            <person name="Fraser C.M."/>
            <person name="Heidelberg J.F."/>
        </authorList>
    </citation>
    <scope>NUCLEOTIDE SEQUENCE [LARGE SCALE GENOMIC DNA]</scope>
    <source>
        <strain>RSA 493 / Nine Mile phase I</strain>
    </source>
</reference>
<organism>
    <name type="scientific">Coxiella burnetii (strain RSA 493 / Nine Mile phase I)</name>
    <dbReference type="NCBI Taxonomy" id="227377"/>
    <lineage>
        <taxon>Bacteria</taxon>
        <taxon>Pseudomonadati</taxon>
        <taxon>Pseudomonadota</taxon>
        <taxon>Gammaproteobacteria</taxon>
        <taxon>Legionellales</taxon>
        <taxon>Coxiellaceae</taxon>
        <taxon>Coxiella</taxon>
    </lineage>
</organism>
<evidence type="ECO:0000255" key="1">
    <source>
        <dbReference type="HAMAP-Rule" id="MF_00662"/>
    </source>
</evidence>
<keyword id="KW-1003">Cell membrane</keyword>
<keyword id="KW-0210">Decarboxylase</keyword>
<keyword id="KW-0444">Lipid biosynthesis</keyword>
<keyword id="KW-0443">Lipid metabolism</keyword>
<keyword id="KW-0456">Lyase</keyword>
<keyword id="KW-0472">Membrane</keyword>
<keyword id="KW-0594">Phospholipid biosynthesis</keyword>
<keyword id="KW-1208">Phospholipid metabolism</keyword>
<keyword id="KW-0670">Pyruvate</keyword>
<keyword id="KW-1185">Reference proteome</keyword>
<keyword id="KW-0865">Zymogen</keyword>
<comment type="function">
    <text evidence="1">Catalyzes the formation of phosphatidylethanolamine (PtdEtn) from phosphatidylserine (PtdSer).</text>
</comment>
<comment type="catalytic activity">
    <reaction evidence="1">
        <text>a 1,2-diacyl-sn-glycero-3-phospho-L-serine + H(+) = a 1,2-diacyl-sn-glycero-3-phosphoethanolamine + CO2</text>
        <dbReference type="Rhea" id="RHEA:20828"/>
        <dbReference type="ChEBI" id="CHEBI:15378"/>
        <dbReference type="ChEBI" id="CHEBI:16526"/>
        <dbReference type="ChEBI" id="CHEBI:57262"/>
        <dbReference type="ChEBI" id="CHEBI:64612"/>
        <dbReference type="EC" id="4.1.1.65"/>
    </reaction>
</comment>
<comment type="cofactor">
    <cofactor evidence="1">
        <name>pyruvate</name>
        <dbReference type="ChEBI" id="CHEBI:15361"/>
    </cofactor>
    <text evidence="1">Binds 1 pyruvoyl group covalently per subunit.</text>
</comment>
<comment type="pathway">
    <text evidence="1">Phospholipid metabolism; phosphatidylethanolamine biosynthesis; phosphatidylethanolamine from CDP-diacylglycerol: step 2/2.</text>
</comment>
<comment type="subunit">
    <text evidence="1">Heterodimer of a large membrane-associated beta subunit and a small pyruvoyl-containing alpha subunit.</text>
</comment>
<comment type="subcellular location">
    <subcellularLocation>
        <location evidence="1">Cell membrane</location>
        <topology evidence="1">Peripheral membrane protein</topology>
    </subcellularLocation>
</comment>
<comment type="PTM">
    <text evidence="1">Is synthesized initially as an inactive proenzyme. Formation of the active enzyme involves a self-maturation process in which the active site pyruvoyl group is generated from an internal serine residue via an autocatalytic post-translational modification. Two non-identical subunits are generated from the proenzyme in this reaction, and the pyruvate is formed at the N-terminus of the alpha chain, which is derived from the carboxyl end of the proenzyme. The autoendoproteolytic cleavage occurs by a canonical serine protease mechanism, in which the side chain hydroxyl group of the serine supplies its oxygen atom to form the C-terminus of the beta chain, while the remainder of the serine residue undergoes an oxidative deamination to produce ammonia and the pyruvoyl prosthetic group on the alpha chain. During this reaction, the Ser that is part of the protease active site of the proenzyme becomes the pyruvoyl prosthetic group, which constitutes an essential element of the active site of the mature decarboxylase.</text>
</comment>
<comment type="similarity">
    <text evidence="1">Belongs to the phosphatidylserine decarboxylase family. PSD-B subfamily. Prokaryotic type I sub-subfamily.</text>
</comment>
<dbReference type="EC" id="4.1.1.65" evidence="1"/>
<dbReference type="EMBL" id="AE016828">
    <property type="protein sequence ID" value="AAO91319.1"/>
    <property type="molecule type" value="Genomic_DNA"/>
</dbReference>
<dbReference type="RefSeq" id="NP_820805.1">
    <property type="nucleotide sequence ID" value="NC_002971.4"/>
</dbReference>
<dbReference type="SMR" id="Q83AQ4"/>
<dbReference type="STRING" id="227377.CBU_1826"/>
<dbReference type="EnsemblBacteria" id="AAO91319">
    <property type="protein sequence ID" value="AAO91319"/>
    <property type="gene ID" value="CBU_1826"/>
</dbReference>
<dbReference type="GeneID" id="1209737"/>
<dbReference type="KEGG" id="cbu:CBU_1826"/>
<dbReference type="PATRIC" id="fig|227377.7.peg.1810"/>
<dbReference type="eggNOG" id="COG0688">
    <property type="taxonomic scope" value="Bacteria"/>
</dbReference>
<dbReference type="HOGENOM" id="CLU_029061_4_1_6"/>
<dbReference type="OrthoDB" id="9802030at2"/>
<dbReference type="UniPathway" id="UPA00558">
    <property type="reaction ID" value="UER00616"/>
</dbReference>
<dbReference type="Proteomes" id="UP000002671">
    <property type="component" value="Chromosome"/>
</dbReference>
<dbReference type="GO" id="GO:0005886">
    <property type="term" value="C:plasma membrane"/>
    <property type="evidence" value="ECO:0007669"/>
    <property type="project" value="UniProtKB-SubCell"/>
</dbReference>
<dbReference type="GO" id="GO:0004609">
    <property type="term" value="F:phosphatidylserine decarboxylase activity"/>
    <property type="evidence" value="ECO:0000318"/>
    <property type="project" value="GO_Central"/>
</dbReference>
<dbReference type="GO" id="GO:0006646">
    <property type="term" value="P:phosphatidylethanolamine biosynthetic process"/>
    <property type="evidence" value="ECO:0000318"/>
    <property type="project" value="GO_Central"/>
</dbReference>
<dbReference type="HAMAP" id="MF_00662">
    <property type="entry name" value="PS_decarb_PSD_B_type1"/>
    <property type="match status" value="1"/>
</dbReference>
<dbReference type="InterPro" id="IPR003817">
    <property type="entry name" value="PS_Dcarbxylase"/>
</dbReference>
<dbReference type="InterPro" id="IPR033177">
    <property type="entry name" value="PSD-B"/>
</dbReference>
<dbReference type="InterPro" id="IPR033178">
    <property type="entry name" value="PSD_type1_pro"/>
</dbReference>
<dbReference type="NCBIfam" id="TIGR00163">
    <property type="entry name" value="PS_decarb"/>
    <property type="match status" value="1"/>
</dbReference>
<dbReference type="PANTHER" id="PTHR10067">
    <property type="entry name" value="PHOSPHATIDYLSERINE DECARBOXYLASE"/>
    <property type="match status" value="1"/>
</dbReference>
<dbReference type="PANTHER" id="PTHR10067:SF6">
    <property type="entry name" value="PHOSPHATIDYLSERINE DECARBOXYLASE PROENZYME, MITOCHONDRIAL"/>
    <property type="match status" value="1"/>
</dbReference>
<dbReference type="Pfam" id="PF02666">
    <property type="entry name" value="PS_Dcarbxylase"/>
    <property type="match status" value="1"/>
</dbReference>
<protein>
    <recommendedName>
        <fullName evidence="1">Phosphatidylserine decarboxylase proenzyme</fullName>
        <ecNumber evidence="1">4.1.1.65</ecNumber>
    </recommendedName>
    <component>
        <recommendedName>
            <fullName evidence="1">Phosphatidylserine decarboxylase alpha chain</fullName>
        </recommendedName>
    </component>
    <component>
        <recommendedName>
            <fullName evidence="1">Phosphatidylserine decarboxylase beta chain</fullName>
        </recommendedName>
    </component>
</protein>